<name>CRYAA_CAVPO</name>
<keyword id="KW-0007">Acetylation</keyword>
<keyword id="KW-0143">Chaperone</keyword>
<keyword id="KW-0963">Cytoplasm</keyword>
<keyword id="KW-0903">Direct protein sequencing</keyword>
<keyword id="KW-0273">Eye lens protein</keyword>
<keyword id="KW-0325">Glycoprotein</keyword>
<keyword id="KW-0479">Metal-binding</keyword>
<keyword id="KW-0488">Methylation</keyword>
<keyword id="KW-0539">Nucleus</keyword>
<keyword id="KW-0597">Phosphoprotein</keyword>
<keyword id="KW-1185">Reference proteome</keyword>
<keyword id="KW-0862">Zinc</keyword>
<organism>
    <name type="scientific">Cavia porcellus</name>
    <name type="common">Guinea pig</name>
    <dbReference type="NCBI Taxonomy" id="10141"/>
    <lineage>
        <taxon>Eukaryota</taxon>
        <taxon>Metazoa</taxon>
        <taxon>Chordata</taxon>
        <taxon>Craniata</taxon>
        <taxon>Vertebrata</taxon>
        <taxon>Euteleostomi</taxon>
        <taxon>Mammalia</taxon>
        <taxon>Eutheria</taxon>
        <taxon>Euarchontoglires</taxon>
        <taxon>Glires</taxon>
        <taxon>Rodentia</taxon>
        <taxon>Hystricomorpha</taxon>
        <taxon>Caviidae</taxon>
        <taxon>Cavia</taxon>
    </lineage>
</organism>
<evidence type="ECO:0000250" key="1"/>
<evidence type="ECO:0000250" key="2">
    <source>
        <dbReference type="UniProtKB" id="P02470"/>
    </source>
</evidence>
<evidence type="ECO:0000250" key="3">
    <source>
        <dbReference type="UniProtKB" id="P02474"/>
    </source>
</evidence>
<evidence type="ECO:0000250" key="4">
    <source>
        <dbReference type="UniProtKB" id="P02489"/>
    </source>
</evidence>
<evidence type="ECO:0000255" key="5">
    <source>
        <dbReference type="PROSITE-ProRule" id="PRU00285"/>
    </source>
</evidence>
<evidence type="ECO:0000256" key="6">
    <source>
        <dbReference type="SAM" id="MobiDB-lite"/>
    </source>
</evidence>
<evidence type="ECO:0000305" key="7"/>
<reference key="1">
    <citation type="book" date="1980" name="Protides of the biological fluids, Proc. 28th colloquium">
        <title>Trends in the molecular evolution of alpha-crystallin.</title>
        <editorList>
            <person name="Peeters H."/>
        </editorList>
        <authorList>
            <person name="de Jong W.W."/>
            <person name="Zweers A."/>
            <person name="Goodman M."/>
        </authorList>
    </citation>
    <scope>PROTEIN SEQUENCE</scope>
</reference>
<proteinExistence type="evidence at protein level"/>
<dbReference type="PIR" id="A02894">
    <property type="entry name" value="CYGPAA"/>
</dbReference>
<dbReference type="RefSeq" id="XP_005001048.1">
    <property type="nucleotide sequence ID" value="XM_005000991.2"/>
</dbReference>
<dbReference type="SMR" id="P68281"/>
<dbReference type="FunCoup" id="P68281">
    <property type="interactions" value="700"/>
</dbReference>
<dbReference type="STRING" id="10141.ENSCPOP00000015097"/>
<dbReference type="GlyCosmos" id="P68281">
    <property type="glycosylation" value="1 site, No reported glycans"/>
</dbReference>
<dbReference type="Ensembl" id="ENSCPOT00000027446.2">
    <property type="protein sequence ID" value="ENSCPOP00000017479.1"/>
    <property type="gene ID" value="ENSCPOG00000004350.4"/>
</dbReference>
<dbReference type="GeneID" id="100135506"/>
<dbReference type="CTD" id="1409"/>
<dbReference type="VEuPathDB" id="HostDB:ENSCPOG00000004350"/>
<dbReference type="GeneTree" id="ENSGT00940000160159"/>
<dbReference type="HOGENOM" id="CLU_095001_2_0_1"/>
<dbReference type="InParanoid" id="P68281"/>
<dbReference type="OrthoDB" id="1431247at2759"/>
<dbReference type="Proteomes" id="UP000005447">
    <property type="component" value="Unassembled WGS sequence"/>
</dbReference>
<dbReference type="Bgee" id="ENSCPOG00000004350">
    <property type="expression patterns" value="Expressed in adult mammalian kidney and 5 other cell types or tissues"/>
</dbReference>
<dbReference type="GO" id="GO:0005737">
    <property type="term" value="C:cytoplasm"/>
    <property type="evidence" value="ECO:0000250"/>
    <property type="project" value="UniProtKB"/>
</dbReference>
<dbReference type="GO" id="GO:0005634">
    <property type="term" value="C:nucleus"/>
    <property type="evidence" value="ECO:0000250"/>
    <property type="project" value="UniProtKB"/>
</dbReference>
<dbReference type="GO" id="GO:0046872">
    <property type="term" value="F:metal ion binding"/>
    <property type="evidence" value="ECO:0007669"/>
    <property type="project" value="UniProtKB-KW"/>
</dbReference>
<dbReference type="GO" id="GO:0005212">
    <property type="term" value="F:structural constituent of eye lens"/>
    <property type="evidence" value="ECO:0007669"/>
    <property type="project" value="UniProtKB-KW"/>
</dbReference>
<dbReference type="GO" id="GO:0051082">
    <property type="term" value="F:unfolded protein binding"/>
    <property type="evidence" value="ECO:0007669"/>
    <property type="project" value="TreeGrafter"/>
</dbReference>
<dbReference type="GO" id="GO:0002088">
    <property type="term" value="P:lens development in camera-type eye"/>
    <property type="evidence" value="ECO:0007669"/>
    <property type="project" value="TreeGrafter"/>
</dbReference>
<dbReference type="GO" id="GO:0043066">
    <property type="term" value="P:negative regulation of apoptotic process"/>
    <property type="evidence" value="ECO:0007669"/>
    <property type="project" value="TreeGrafter"/>
</dbReference>
<dbReference type="GO" id="GO:0042026">
    <property type="term" value="P:protein refolding"/>
    <property type="evidence" value="ECO:0007669"/>
    <property type="project" value="TreeGrafter"/>
</dbReference>
<dbReference type="GO" id="GO:0009408">
    <property type="term" value="P:response to heat"/>
    <property type="evidence" value="ECO:0007669"/>
    <property type="project" value="TreeGrafter"/>
</dbReference>
<dbReference type="FunFam" id="2.60.40.790:FF:000008">
    <property type="entry name" value="Alpha-crystallin A chain"/>
    <property type="match status" value="1"/>
</dbReference>
<dbReference type="Gene3D" id="2.60.40.790">
    <property type="match status" value="1"/>
</dbReference>
<dbReference type="InterPro" id="IPR002068">
    <property type="entry name" value="A-crystallin/Hsp20_dom"/>
</dbReference>
<dbReference type="InterPro" id="IPR055269">
    <property type="entry name" value="Alpha-crystallin/HSP_16"/>
</dbReference>
<dbReference type="InterPro" id="IPR001436">
    <property type="entry name" value="Alpha-crystallin/sHSP_animal"/>
</dbReference>
<dbReference type="InterPro" id="IPR003090">
    <property type="entry name" value="Alpha-crystallin_N"/>
</dbReference>
<dbReference type="InterPro" id="IPR008978">
    <property type="entry name" value="HSP20-like_chaperone"/>
</dbReference>
<dbReference type="PANTHER" id="PTHR45640:SF14">
    <property type="entry name" value="ALPHA-CRYSTALLIN A CHAIN"/>
    <property type="match status" value="1"/>
</dbReference>
<dbReference type="PANTHER" id="PTHR45640">
    <property type="entry name" value="HEAT SHOCK PROTEIN HSP-12.2-RELATED"/>
    <property type="match status" value="1"/>
</dbReference>
<dbReference type="Pfam" id="PF00525">
    <property type="entry name" value="Crystallin"/>
    <property type="match status" value="1"/>
</dbReference>
<dbReference type="Pfam" id="PF00011">
    <property type="entry name" value="HSP20"/>
    <property type="match status" value="1"/>
</dbReference>
<dbReference type="PIRSF" id="PIRSF036514">
    <property type="entry name" value="Sm_HSP_B1"/>
    <property type="match status" value="1"/>
</dbReference>
<dbReference type="PRINTS" id="PR00299">
    <property type="entry name" value="ACRYSTALLIN"/>
</dbReference>
<dbReference type="SUPFAM" id="SSF49764">
    <property type="entry name" value="HSP20-like chaperones"/>
    <property type="match status" value="1"/>
</dbReference>
<dbReference type="PROSITE" id="PS01031">
    <property type="entry name" value="SHSP"/>
    <property type="match status" value="1"/>
</dbReference>
<protein>
    <recommendedName>
        <fullName>Alpha-crystallin A chain</fullName>
    </recommendedName>
</protein>
<gene>
    <name type="primary">CRYAA</name>
</gene>
<accession>P68281</accession>
<accession>P02491</accession>
<sequence length="173" mass="19807">MDVTIQHPWFKRALGPFYPSRLFDQFFGEGLFEYDLLPFLSSTISPYYRQSLFRTVLDSGISEVRSDRDKFVIFLDVKHFSPEDLTVKVQEDFVEIHGKHNERQDDHGYISREFHRRYRLPSNVDQSALSCSLSADGMLTFSGPKVQSGLDAGHSERAIPVSREEKPSSAPSS</sequence>
<feature type="chain" id="PRO_0000125852" description="Alpha-crystallin A chain">
    <location>
        <begin position="1"/>
        <end position="173"/>
    </location>
</feature>
<feature type="domain" description="sHSP" evidence="5">
    <location>
        <begin position="52"/>
        <end position="162"/>
    </location>
</feature>
<feature type="region of interest" description="Required for complex formation with BFSP1 and BFSP2" evidence="4">
    <location>
        <begin position="1"/>
        <end position="63"/>
    </location>
</feature>
<feature type="region of interest" description="Disordered" evidence="6">
    <location>
        <begin position="145"/>
        <end position="173"/>
    </location>
</feature>
<feature type="compositionally biased region" description="Basic and acidic residues" evidence="6">
    <location>
        <begin position="153"/>
        <end position="167"/>
    </location>
</feature>
<feature type="binding site" evidence="2">
    <location>
        <position position="100"/>
    </location>
    <ligand>
        <name>Zn(2+)</name>
        <dbReference type="ChEBI" id="CHEBI:29105"/>
        <label>1</label>
    </ligand>
</feature>
<feature type="binding site" evidence="2">
    <location>
        <position position="102"/>
    </location>
    <ligand>
        <name>Zn(2+)</name>
        <dbReference type="ChEBI" id="CHEBI:29105"/>
        <label>1</label>
    </ligand>
</feature>
<feature type="binding site" evidence="2">
    <location>
        <position position="107"/>
    </location>
    <ligand>
        <name>Zn(2+)</name>
        <dbReference type="ChEBI" id="CHEBI:29105"/>
        <label>2</label>
    </ligand>
</feature>
<feature type="binding site" evidence="2">
    <location>
        <position position="154"/>
    </location>
    <ligand>
        <name>Zn(2+)</name>
        <dbReference type="ChEBI" id="CHEBI:29105"/>
        <label>3</label>
    </ligand>
</feature>
<feature type="modified residue" description="N-acetylmethionine" evidence="3 7">
    <location>
        <position position="1"/>
    </location>
</feature>
<feature type="modified residue" description="Deamidated glutamine; partial" evidence="1">
    <location>
        <position position="6"/>
    </location>
</feature>
<feature type="modified residue" description="Phosphoserine" evidence="4">
    <location>
        <position position="45"/>
    </location>
</feature>
<feature type="modified residue" description="Deamidated glutamine; partial" evidence="1">
    <location>
        <position position="50"/>
    </location>
</feature>
<feature type="modified residue" description="N6-acetyllysine" evidence="4">
    <location>
        <position position="70"/>
    </location>
</feature>
<feature type="modified residue" description="Deamidated glutamine; partial" evidence="1">
    <location>
        <position position="90"/>
    </location>
</feature>
<feature type="modified residue" description="N6-acetyllysine" evidence="4">
    <location>
        <position position="99"/>
    </location>
</feature>
<feature type="modified residue" description="Deamidated asparagine; partial" evidence="1">
    <location>
        <position position="101"/>
    </location>
</feature>
<feature type="modified residue" description="Phosphoserine" evidence="2">
    <location>
        <position position="122"/>
    </location>
</feature>
<feature type="modified residue" description="Deamidated asparagine; partial" evidence="1">
    <location>
        <position position="123"/>
    </location>
</feature>
<feature type="modified residue" description="Deamidated glutamine; partial" evidence="1">
    <location>
        <position position="147"/>
    </location>
</feature>
<feature type="glycosylation site" description="O-linked (GlcNAc) serine" evidence="1">
    <location>
        <position position="162"/>
    </location>
</feature>
<comment type="function">
    <text evidence="4">Contributes to the transparency and refractive index of the lens. Acts as a chaperone, preventing aggregation of various proteins under a wide range of stress conditions. Required for the correct formation of lens intermediate filaments as part of a complex composed of BFSP1, BFSP2 and CRYAA.</text>
</comment>
<comment type="subunit">
    <text evidence="2 4">Heteromer composed of three CRYAA and one CRYAB subunits. Inter-subunit bridging via zinc ions enhances stability, which is crucial as there is no protein turn over in the lens. Can also form homodimers and homotetramers (dimers of dimers) which serve as the building blocks of homooligomers (By similarity). Within homooligomers, the zinc-binding motif is created from residues of 3 different molecules. His-100 and Glu-102 from one molecule are ligands of the zinc ion, and His-107 and His-154 residues from additional molecules complete the site with tetrahedral coordination geometry (By similarity). Part of a complex required for lens intermediate filament formation composed of BFSP1, BFSP2 and CRYAA (By similarity).</text>
</comment>
<comment type="subcellular location">
    <subcellularLocation>
        <location evidence="4">Cytoplasm</location>
    </subcellularLocation>
    <subcellularLocation>
        <location evidence="4">Nucleus</location>
    </subcellularLocation>
    <text evidence="4">Translocates to the nucleus during heat shock and resides in sub-nuclear structures known as SC35 speckles or nuclear splicing speckles.</text>
</comment>
<comment type="PTM">
    <text evidence="4">Acetylation at Lys-70 may increase chaperone activity.</text>
</comment>
<comment type="PTM">
    <text evidence="4">Undergoes age-dependent proteolytical cleavage at the C-terminus.</text>
</comment>
<comment type="similarity">
    <text evidence="5">Belongs to the small heat shock protein (HSP20) family.</text>
</comment>